<evidence type="ECO:0000255" key="1">
    <source>
        <dbReference type="HAMAP-Rule" id="MF_01402"/>
    </source>
</evidence>
<dbReference type="EC" id="5.4.2.12" evidence="1"/>
<dbReference type="EMBL" id="CP000969">
    <property type="protein sequence ID" value="ACB09397.1"/>
    <property type="molecule type" value="Genomic_DNA"/>
</dbReference>
<dbReference type="RefSeq" id="WP_012310909.1">
    <property type="nucleotide sequence ID" value="NC_010483.1"/>
</dbReference>
<dbReference type="SMR" id="B1LAP9"/>
<dbReference type="KEGG" id="trq:TRQ2_1050"/>
<dbReference type="HOGENOM" id="CLU_034906_2_0_0"/>
<dbReference type="UniPathway" id="UPA00109">
    <property type="reaction ID" value="UER00186"/>
</dbReference>
<dbReference type="Proteomes" id="UP000001687">
    <property type="component" value="Chromosome"/>
</dbReference>
<dbReference type="GO" id="GO:0046872">
    <property type="term" value="F:metal ion binding"/>
    <property type="evidence" value="ECO:0007669"/>
    <property type="project" value="InterPro"/>
</dbReference>
<dbReference type="GO" id="GO:0004619">
    <property type="term" value="F:phosphoglycerate mutase activity"/>
    <property type="evidence" value="ECO:0007669"/>
    <property type="project" value="UniProtKB-EC"/>
</dbReference>
<dbReference type="GO" id="GO:0006096">
    <property type="term" value="P:glycolytic process"/>
    <property type="evidence" value="ECO:0007669"/>
    <property type="project" value="UniProtKB-UniRule"/>
</dbReference>
<dbReference type="CDD" id="cd16011">
    <property type="entry name" value="iPGM_like"/>
    <property type="match status" value="1"/>
</dbReference>
<dbReference type="Gene3D" id="3.40.720.10">
    <property type="entry name" value="Alkaline Phosphatase, subunit A"/>
    <property type="match status" value="2"/>
</dbReference>
<dbReference type="HAMAP" id="MF_01402_B">
    <property type="entry name" value="ApgM_B"/>
    <property type="match status" value="1"/>
</dbReference>
<dbReference type="InterPro" id="IPR017850">
    <property type="entry name" value="Alkaline_phosphatase_core_sf"/>
</dbReference>
<dbReference type="InterPro" id="IPR023665">
    <property type="entry name" value="ApgAM_prokaryotes"/>
</dbReference>
<dbReference type="InterPro" id="IPR006124">
    <property type="entry name" value="Metalloenzyme"/>
</dbReference>
<dbReference type="InterPro" id="IPR004456">
    <property type="entry name" value="Pglycerate_mutase_ApgM"/>
</dbReference>
<dbReference type="NCBIfam" id="TIGR00306">
    <property type="entry name" value="apgM"/>
    <property type="match status" value="1"/>
</dbReference>
<dbReference type="NCBIfam" id="NF003160">
    <property type="entry name" value="PRK04135.1"/>
    <property type="match status" value="1"/>
</dbReference>
<dbReference type="PANTHER" id="PTHR31209">
    <property type="entry name" value="COFACTOR-INDEPENDENT PHOSPHOGLYCERATE MUTASE"/>
    <property type="match status" value="1"/>
</dbReference>
<dbReference type="PANTHER" id="PTHR31209:SF0">
    <property type="entry name" value="METALLOENZYME DOMAIN-CONTAINING PROTEIN"/>
    <property type="match status" value="1"/>
</dbReference>
<dbReference type="Pfam" id="PF01676">
    <property type="entry name" value="Metalloenzyme"/>
    <property type="match status" value="1"/>
</dbReference>
<dbReference type="Pfam" id="PF10143">
    <property type="entry name" value="PhosphMutase"/>
    <property type="match status" value="1"/>
</dbReference>
<dbReference type="PIRSF" id="PIRSF006392">
    <property type="entry name" value="IPGAM_arch"/>
    <property type="match status" value="1"/>
</dbReference>
<dbReference type="SUPFAM" id="SSF53649">
    <property type="entry name" value="Alkaline phosphatase-like"/>
    <property type="match status" value="1"/>
</dbReference>
<organism>
    <name type="scientific">Thermotoga sp. (strain RQ2)</name>
    <dbReference type="NCBI Taxonomy" id="126740"/>
    <lineage>
        <taxon>Bacteria</taxon>
        <taxon>Thermotogati</taxon>
        <taxon>Thermotogota</taxon>
        <taxon>Thermotogae</taxon>
        <taxon>Thermotogales</taxon>
        <taxon>Thermotogaceae</taxon>
        <taxon>Thermotoga</taxon>
    </lineage>
</organism>
<sequence length="401" mass="44265">MFDKQEFVSKLVTEEKAKIVLLVMDGLGDIPVNGKTPLQAANTPNLDNLAKESDLGQTIPVLPGITPGSGPGHLSLFGYDPIKYQIGRGILEALGIGVEVGEKDVVARANFATWDGKVVLDRRAGRPATEESAKVVQLLSEKIKKIEDVEITFYPGKEHRFVVKFTGEGLGDKVTDADPQKEGHPMAWAEGLDEPSKKTARIVNELIKKIAEVLKDNSKINFALIRGFSKYPDLPKFPQVYKMKAGAIATYPMYRGLAKLVGMEIIETGQTVADEIKTLKEKWNDYDFFYVHVKKTDSYGEDGKFEEKVKVIEEVDAIIPEIVSLNPDVLVITGDHSTPVPLKAHSWHPVPLLIWSKYTRRGLSQAFNEFECARGTLGTIHASDVMTLALAYAGRLEKFGA</sequence>
<reference key="1">
    <citation type="journal article" date="2011" name="J. Bacteriol.">
        <title>Genome sequence of Thermotoga sp. strain RQ2, a hyperthermophilic bacterium isolated from a geothermally heated region of the seafloor near Ribeira Quente, the Azores.</title>
        <authorList>
            <person name="Swithers K.S."/>
            <person name="DiPippo J.L."/>
            <person name="Bruce D.C."/>
            <person name="Detter C."/>
            <person name="Tapia R."/>
            <person name="Han S."/>
            <person name="Saunders E."/>
            <person name="Goodwin L.A."/>
            <person name="Han J."/>
            <person name="Woyke T."/>
            <person name="Pitluck S."/>
            <person name="Pennacchio L."/>
            <person name="Nolan M."/>
            <person name="Mikhailova N."/>
            <person name="Lykidis A."/>
            <person name="Land M.L."/>
            <person name="Brettin T."/>
            <person name="Stetter K.O."/>
            <person name="Nelson K.E."/>
            <person name="Gogarten J.P."/>
            <person name="Noll K.M."/>
        </authorList>
    </citation>
    <scope>NUCLEOTIDE SEQUENCE [LARGE SCALE GENOMIC DNA]</scope>
    <source>
        <strain>RQ2</strain>
    </source>
</reference>
<keyword id="KW-0324">Glycolysis</keyword>
<keyword id="KW-0413">Isomerase</keyword>
<protein>
    <recommendedName>
        <fullName evidence="1">Probable 2,3-bisphosphoglycerate-independent phosphoglycerate mutase</fullName>
        <shortName evidence="1">BPG-independent PGAM</shortName>
        <shortName evidence="1">Phosphoglyceromutase</shortName>
        <shortName evidence="1">aPGAM</shortName>
        <ecNumber evidence="1">5.4.2.12</ecNumber>
    </recommendedName>
</protein>
<comment type="function">
    <text evidence="1">Catalyzes the interconversion of 2-phosphoglycerate and 3-phosphoglycerate.</text>
</comment>
<comment type="catalytic activity">
    <reaction evidence="1">
        <text>(2R)-2-phosphoglycerate = (2R)-3-phosphoglycerate</text>
        <dbReference type="Rhea" id="RHEA:15901"/>
        <dbReference type="ChEBI" id="CHEBI:58272"/>
        <dbReference type="ChEBI" id="CHEBI:58289"/>
        <dbReference type="EC" id="5.4.2.12"/>
    </reaction>
</comment>
<comment type="pathway">
    <text evidence="1">Carbohydrate degradation; glycolysis; pyruvate from D-glyceraldehyde 3-phosphate: step 3/5.</text>
</comment>
<comment type="similarity">
    <text evidence="1">Belongs to the BPG-independent phosphoglycerate mutase family. A-PGAM subfamily.</text>
</comment>
<proteinExistence type="inferred from homology"/>
<name>APGM_THESQ</name>
<gene>
    <name evidence="1" type="primary">apgM</name>
    <name type="ordered locus">TRQ2_1050</name>
</gene>
<accession>B1LAP9</accession>
<feature type="chain" id="PRO_1000145453" description="Probable 2,3-bisphosphoglycerate-independent phosphoglycerate mutase">
    <location>
        <begin position="1"/>
        <end position="401"/>
    </location>
</feature>